<organism>
    <name type="scientific">Photobacterium profundum (strain SS9)</name>
    <dbReference type="NCBI Taxonomy" id="298386"/>
    <lineage>
        <taxon>Bacteria</taxon>
        <taxon>Pseudomonadati</taxon>
        <taxon>Pseudomonadota</taxon>
        <taxon>Gammaproteobacteria</taxon>
        <taxon>Vibrionales</taxon>
        <taxon>Vibrionaceae</taxon>
        <taxon>Photobacterium</taxon>
    </lineage>
</organism>
<sequence>MKVSRRKFIKAQAVASAAAAAGISIPISASNVVTDSSLTKITWEKAPCRFCGTGCSVNVGTKEGKVVATHGDIKSPVNRGLNCVKGYFLSKIMYGKDRLTQPLLRMTDGKFDKNGEFSPISWDQAFDIMAEKWKKTLKEKGPEAIGMFGSGQWTIYDGYAASKLMKAGFRSNNLEPNARHCMASAVVGFIRTFGIDEPMGCYDDIEAADAFVLWGSNMVEMHPILWTRVTDRRLSVPGVKVSVLSTFEHRSFELADIPIIFTPQSDLAILNFIANYIITNDKVNKDFTSKHVNFRRGTTDIGYGLRPEHPLQQAAKNPDSGDSTPMTFEEFKAFVSEYTVEKASEISGVKPDKLIELAELYANPETKVVSFWTMGFNQHTRGVWCNNLVYNIHLLTGKISTPGNSPFSLTGQPSACGTAREVGTFAHRLPADLVVTNPEHRKIAEKIWKLPDGTIPGKVGAHAVLQSRMLKDGKINAYWIQVNNNLQAGANINEETLPGYRNPDNFIVVSEAYPTVTSQAADLVLPTAMWVEKEGGFGNAERRTQLWHQMVEAPGESKPDLWQLMEFSKRFKTDEVWPKELLDSNPDYKGKTLFDVLFINGNVNKYPLDDLAEGTLNDESNYYGFYVHKGLFEEYAEFGRGHGHDLAPFDMYHETRGLRWPVVDGKETLWRYREGSDPYVKEGAGFEFYGKPDGKAIIFALPYEPAAESPDEEYDMWLSTGRVIEHWHSGSMTQRVPELYKAYPDAQVFMHPDDAKSRGLRRGDAVKVMSRRGEIITRVETRGRNKPPIGLVFVPWFDASQLINKVTLDATDPLSKQTDFKKCAVKIVKA</sequence>
<evidence type="ECO:0000255" key="1">
    <source>
        <dbReference type="HAMAP-Rule" id="MF_01630"/>
    </source>
</evidence>
<evidence type="ECO:0000305" key="2"/>
<comment type="function">
    <text evidence="1">Catalytic subunit of the periplasmic nitrate reductase complex NapAB. Receives electrons from NapB and catalyzes the reduction of nitrate to nitrite.</text>
</comment>
<comment type="catalytic activity">
    <reaction evidence="1">
        <text>2 Fe(II)-[cytochrome] + nitrate + 2 H(+) = 2 Fe(III)-[cytochrome] + nitrite + H2O</text>
        <dbReference type="Rhea" id="RHEA:12909"/>
        <dbReference type="Rhea" id="RHEA-COMP:11777"/>
        <dbReference type="Rhea" id="RHEA-COMP:11778"/>
        <dbReference type="ChEBI" id="CHEBI:15377"/>
        <dbReference type="ChEBI" id="CHEBI:15378"/>
        <dbReference type="ChEBI" id="CHEBI:16301"/>
        <dbReference type="ChEBI" id="CHEBI:17632"/>
        <dbReference type="ChEBI" id="CHEBI:29033"/>
        <dbReference type="ChEBI" id="CHEBI:29034"/>
        <dbReference type="EC" id="1.9.6.1"/>
    </reaction>
</comment>
<comment type="cofactor">
    <cofactor evidence="1">
        <name>[4Fe-4S] cluster</name>
        <dbReference type="ChEBI" id="CHEBI:49883"/>
    </cofactor>
    <text evidence="1">Binds 1 [4Fe-4S] cluster.</text>
</comment>
<comment type="cofactor">
    <cofactor evidence="1">
        <name>Mo-bis(molybdopterin guanine dinucleotide)</name>
        <dbReference type="ChEBI" id="CHEBI:60539"/>
    </cofactor>
    <text evidence="1">Binds 1 molybdenum-bis(molybdopterin guanine dinucleotide) (Mo-bis-MGD) cofactor per subunit.</text>
</comment>
<comment type="subunit">
    <text evidence="1">Component of the periplasmic nitrate reductase NapAB complex composed of NapA and NapB.</text>
</comment>
<comment type="subcellular location">
    <subcellularLocation>
        <location evidence="1">Periplasm</location>
    </subcellularLocation>
</comment>
<comment type="PTM">
    <text evidence="1">Predicted to be exported by the Tat system. The position of the signal peptide cleavage has not been experimentally proven.</text>
</comment>
<comment type="similarity">
    <text evidence="1">Belongs to the prokaryotic molybdopterin-containing oxidoreductase family. NasA/NapA/NarB subfamily.</text>
</comment>
<comment type="sequence caution" evidence="2">
    <conflict type="erroneous initiation">
        <sequence resource="EMBL-CDS" id="CAG20433"/>
    </conflict>
</comment>
<protein>
    <recommendedName>
        <fullName evidence="1">Periplasmic nitrate reductase 2</fullName>
        <ecNumber evidence="1">1.9.6.1</ecNumber>
    </recommendedName>
</protein>
<keyword id="KW-0004">4Fe-4S</keyword>
<keyword id="KW-0249">Electron transport</keyword>
<keyword id="KW-0408">Iron</keyword>
<keyword id="KW-0411">Iron-sulfur</keyword>
<keyword id="KW-0479">Metal-binding</keyword>
<keyword id="KW-0500">Molybdenum</keyword>
<keyword id="KW-0534">Nitrate assimilation</keyword>
<keyword id="KW-0560">Oxidoreductase</keyword>
<keyword id="KW-0574">Periplasm</keyword>
<keyword id="KW-1185">Reference proteome</keyword>
<keyword id="KW-0732">Signal</keyword>
<keyword id="KW-0813">Transport</keyword>
<accession>Q6LQJ3</accession>
<proteinExistence type="inferred from homology"/>
<reference key="1">
    <citation type="journal article" date="2005" name="Science">
        <title>Life at depth: Photobacterium profundum genome sequence and expression analysis.</title>
        <authorList>
            <person name="Vezzi A."/>
            <person name="Campanaro S."/>
            <person name="D'Angelo M."/>
            <person name="Simonato F."/>
            <person name="Vitulo N."/>
            <person name="Lauro F.M."/>
            <person name="Cestaro A."/>
            <person name="Malacrida G."/>
            <person name="Simionati B."/>
            <person name="Cannata N."/>
            <person name="Romualdi C."/>
            <person name="Bartlett D.H."/>
            <person name="Valle G."/>
        </authorList>
    </citation>
    <scope>NUCLEOTIDE SEQUENCE [LARGE SCALE GENOMIC DNA]</scope>
    <source>
        <strain>ATCC BAA-1253 / SS9</strain>
    </source>
</reference>
<name>NAPA2_PHOPR</name>
<feature type="signal peptide" description="Tat-type signal" evidence="1">
    <location>
        <begin position="1"/>
        <end position="31"/>
    </location>
</feature>
<feature type="chain" id="PRO_0000045994" description="Periplasmic nitrate reductase 2" evidence="1">
    <location>
        <begin position="32"/>
        <end position="830"/>
    </location>
</feature>
<feature type="domain" description="4Fe-4S Mo/W bis-MGD-type" evidence="1">
    <location>
        <begin position="41"/>
        <end position="97"/>
    </location>
</feature>
<feature type="binding site" evidence="1">
    <location>
        <position position="48"/>
    </location>
    <ligand>
        <name>[4Fe-4S] cluster</name>
        <dbReference type="ChEBI" id="CHEBI:49883"/>
    </ligand>
</feature>
<feature type="binding site" evidence="1">
    <location>
        <position position="51"/>
    </location>
    <ligand>
        <name>[4Fe-4S] cluster</name>
        <dbReference type="ChEBI" id="CHEBI:49883"/>
    </ligand>
</feature>
<feature type="binding site" evidence="1">
    <location>
        <position position="55"/>
    </location>
    <ligand>
        <name>[4Fe-4S] cluster</name>
        <dbReference type="ChEBI" id="CHEBI:49883"/>
    </ligand>
</feature>
<feature type="binding site" evidence="1">
    <location>
        <position position="83"/>
    </location>
    <ligand>
        <name>[4Fe-4S] cluster</name>
        <dbReference type="ChEBI" id="CHEBI:49883"/>
    </ligand>
</feature>
<feature type="binding site" evidence="1">
    <location>
        <position position="85"/>
    </location>
    <ligand>
        <name>Mo-bis(molybdopterin guanine dinucleotide)</name>
        <dbReference type="ChEBI" id="CHEBI:60539"/>
    </ligand>
</feature>
<feature type="binding site" evidence="1">
    <location>
        <position position="152"/>
    </location>
    <ligand>
        <name>Mo-bis(molybdopterin guanine dinucleotide)</name>
        <dbReference type="ChEBI" id="CHEBI:60539"/>
    </ligand>
</feature>
<feature type="binding site" evidence="1">
    <location>
        <position position="177"/>
    </location>
    <ligand>
        <name>Mo-bis(molybdopterin guanine dinucleotide)</name>
        <dbReference type="ChEBI" id="CHEBI:60539"/>
    </ligand>
</feature>
<feature type="binding site" evidence="1">
    <location>
        <position position="181"/>
    </location>
    <ligand>
        <name>Mo-bis(molybdopterin guanine dinucleotide)</name>
        <dbReference type="ChEBI" id="CHEBI:60539"/>
    </ligand>
</feature>
<feature type="binding site" evidence="1">
    <location>
        <begin position="245"/>
        <end position="249"/>
    </location>
    <ligand>
        <name>Mo-bis(molybdopterin guanine dinucleotide)</name>
        <dbReference type="ChEBI" id="CHEBI:60539"/>
    </ligand>
</feature>
<feature type="binding site" evidence="1">
    <location>
        <begin position="264"/>
        <end position="266"/>
    </location>
    <ligand>
        <name>Mo-bis(molybdopterin guanine dinucleotide)</name>
        <dbReference type="ChEBI" id="CHEBI:60539"/>
    </ligand>
</feature>
<feature type="binding site" evidence="1">
    <location>
        <position position="374"/>
    </location>
    <ligand>
        <name>Mo-bis(molybdopterin guanine dinucleotide)</name>
        <dbReference type="ChEBI" id="CHEBI:60539"/>
    </ligand>
</feature>
<feature type="binding site" evidence="1">
    <location>
        <position position="378"/>
    </location>
    <ligand>
        <name>Mo-bis(molybdopterin guanine dinucleotide)</name>
        <dbReference type="ChEBI" id="CHEBI:60539"/>
    </ligand>
</feature>
<feature type="binding site" evidence="1">
    <location>
        <position position="484"/>
    </location>
    <ligand>
        <name>Mo-bis(molybdopterin guanine dinucleotide)</name>
        <dbReference type="ChEBI" id="CHEBI:60539"/>
    </ligand>
</feature>
<feature type="binding site" evidence="1">
    <location>
        <begin position="510"/>
        <end position="511"/>
    </location>
    <ligand>
        <name>Mo-bis(molybdopterin guanine dinucleotide)</name>
        <dbReference type="ChEBI" id="CHEBI:60539"/>
    </ligand>
</feature>
<feature type="binding site" evidence="1">
    <location>
        <position position="533"/>
    </location>
    <ligand>
        <name>Mo-bis(molybdopterin guanine dinucleotide)</name>
        <dbReference type="ChEBI" id="CHEBI:60539"/>
    </ligand>
</feature>
<feature type="binding site" evidence="1">
    <location>
        <position position="560"/>
    </location>
    <ligand>
        <name>Mo-bis(molybdopterin guanine dinucleotide)</name>
        <dbReference type="ChEBI" id="CHEBI:60539"/>
    </ligand>
</feature>
<feature type="binding site" evidence="1">
    <location>
        <begin position="720"/>
        <end position="729"/>
    </location>
    <ligand>
        <name>Mo-bis(molybdopterin guanine dinucleotide)</name>
        <dbReference type="ChEBI" id="CHEBI:60539"/>
    </ligand>
</feature>
<feature type="binding site" evidence="1">
    <location>
        <position position="796"/>
    </location>
    <ligand>
        <name>substrate</name>
    </ligand>
</feature>
<feature type="binding site" evidence="1">
    <location>
        <position position="804"/>
    </location>
    <ligand>
        <name>Mo-bis(molybdopterin guanine dinucleotide)</name>
        <dbReference type="ChEBI" id="CHEBI:60539"/>
    </ligand>
</feature>
<feature type="binding site" evidence="1">
    <location>
        <position position="821"/>
    </location>
    <ligand>
        <name>Mo-bis(molybdopterin guanine dinucleotide)</name>
        <dbReference type="ChEBI" id="CHEBI:60539"/>
    </ligand>
</feature>
<gene>
    <name evidence="1" type="primary">napA2</name>
    <name type="ordered locus">PBPRA2030</name>
</gene>
<dbReference type="EC" id="1.9.6.1" evidence="1"/>
<dbReference type="EMBL" id="CR378669">
    <property type="protein sequence ID" value="CAG20433.1"/>
    <property type="status" value="ALT_INIT"/>
    <property type="molecule type" value="Genomic_DNA"/>
</dbReference>
<dbReference type="RefSeq" id="WP_041394329.1">
    <property type="nucleotide sequence ID" value="NC_006370.1"/>
</dbReference>
<dbReference type="SMR" id="Q6LQJ3"/>
<dbReference type="STRING" id="298386.PBPRA2030"/>
<dbReference type="KEGG" id="ppr:PBPRA2030"/>
<dbReference type="eggNOG" id="COG0243">
    <property type="taxonomic scope" value="Bacteria"/>
</dbReference>
<dbReference type="HOGENOM" id="CLU_000422_13_4_6"/>
<dbReference type="Proteomes" id="UP000000593">
    <property type="component" value="Chromosome 1"/>
</dbReference>
<dbReference type="GO" id="GO:0016020">
    <property type="term" value="C:membrane"/>
    <property type="evidence" value="ECO:0007669"/>
    <property type="project" value="TreeGrafter"/>
</dbReference>
<dbReference type="GO" id="GO:0009325">
    <property type="term" value="C:nitrate reductase complex"/>
    <property type="evidence" value="ECO:0007669"/>
    <property type="project" value="TreeGrafter"/>
</dbReference>
<dbReference type="GO" id="GO:0042597">
    <property type="term" value="C:periplasmic space"/>
    <property type="evidence" value="ECO:0007669"/>
    <property type="project" value="UniProtKB-SubCell"/>
</dbReference>
<dbReference type="GO" id="GO:0051539">
    <property type="term" value="F:4 iron, 4 sulfur cluster binding"/>
    <property type="evidence" value="ECO:0007669"/>
    <property type="project" value="UniProtKB-KW"/>
</dbReference>
<dbReference type="GO" id="GO:0009055">
    <property type="term" value="F:electron transfer activity"/>
    <property type="evidence" value="ECO:0007669"/>
    <property type="project" value="UniProtKB-UniRule"/>
</dbReference>
<dbReference type="GO" id="GO:0005506">
    <property type="term" value="F:iron ion binding"/>
    <property type="evidence" value="ECO:0007669"/>
    <property type="project" value="UniProtKB-UniRule"/>
</dbReference>
<dbReference type="GO" id="GO:0030151">
    <property type="term" value="F:molybdenum ion binding"/>
    <property type="evidence" value="ECO:0007669"/>
    <property type="project" value="InterPro"/>
</dbReference>
<dbReference type="GO" id="GO:0043546">
    <property type="term" value="F:molybdopterin cofactor binding"/>
    <property type="evidence" value="ECO:0007669"/>
    <property type="project" value="InterPro"/>
</dbReference>
<dbReference type="GO" id="GO:0050140">
    <property type="term" value="F:nitrate reductase (cytochrome) activity"/>
    <property type="evidence" value="ECO:0007669"/>
    <property type="project" value="UniProtKB-EC"/>
</dbReference>
<dbReference type="GO" id="GO:0045333">
    <property type="term" value="P:cellular respiration"/>
    <property type="evidence" value="ECO:0007669"/>
    <property type="project" value="UniProtKB-ARBA"/>
</dbReference>
<dbReference type="GO" id="GO:0006777">
    <property type="term" value="P:Mo-molybdopterin cofactor biosynthetic process"/>
    <property type="evidence" value="ECO:0007669"/>
    <property type="project" value="UniProtKB-UniRule"/>
</dbReference>
<dbReference type="GO" id="GO:0042128">
    <property type="term" value="P:nitrate assimilation"/>
    <property type="evidence" value="ECO:0007669"/>
    <property type="project" value="UniProtKB-UniRule"/>
</dbReference>
<dbReference type="CDD" id="cd02791">
    <property type="entry name" value="MopB_CT_Nitrate-R-NapA-like"/>
    <property type="match status" value="1"/>
</dbReference>
<dbReference type="CDD" id="cd02754">
    <property type="entry name" value="MopB_Nitrate-R-NapA-like"/>
    <property type="match status" value="1"/>
</dbReference>
<dbReference type="FunFam" id="2.40.40.20:FF:000005">
    <property type="entry name" value="Periplasmic nitrate reductase"/>
    <property type="match status" value="1"/>
</dbReference>
<dbReference type="Gene3D" id="2.40.40.20">
    <property type="match status" value="1"/>
</dbReference>
<dbReference type="Gene3D" id="3.30.200.210">
    <property type="match status" value="1"/>
</dbReference>
<dbReference type="Gene3D" id="3.40.50.740">
    <property type="match status" value="1"/>
</dbReference>
<dbReference type="Gene3D" id="3.40.228.10">
    <property type="entry name" value="Dimethylsulfoxide Reductase, domain 2"/>
    <property type="match status" value="1"/>
</dbReference>
<dbReference type="HAMAP" id="MF_01630">
    <property type="entry name" value="Nitrate_reduct_NapA"/>
    <property type="match status" value="1"/>
</dbReference>
<dbReference type="InterPro" id="IPR009010">
    <property type="entry name" value="Asp_de-COase-like_dom_sf"/>
</dbReference>
<dbReference type="InterPro" id="IPR041957">
    <property type="entry name" value="CT_Nitrate-R-NapA-like"/>
</dbReference>
<dbReference type="InterPro" id="IPR006657">
    <property type="entry name" value="MoPterin_dinucl-bd_dom"/>
</dbReference>
<dbReference type="InterPro" id="IPR006656">
    <property type="entry name" value="Mopterin_OxRdtase"/>
</dbReference>
<dbReference type="InterPro" id="IPR006963">
    <property type="entry name" value="Mopterin_OxRdtase_4Fe-4S_dom"/>
</dbReference>
<dbReference type="InterPro" id="IPR027467">
    <property type="entry name" value="MopterinOxRdtase_cofactor_BS"/>
</dbReference>
<dbReference type="InterPro" id="IPR010051">
    <property type="entry name" value="Periplasm_NO3_reductase_lsu"/>
</dbReference>
<dbReference type="InterPro" id="IPR050123">
    <property type="entry name" value="Prok_molybdopt-oxidoreductase"/>
</dbReference>
<dbReference type="InterPro" id="IPR006311">
    <property type="entry name" value="TAT_signal"/>
</dbReference>
<dbReference type="InterPro" id="IPR019546">
    <property type="entry name" value="TAT_signal_bac_arc"/>
</dbReference>
<dbReference type="NCBIfam" id="TIGR01706">
    <property type="entry name" value="NAPA"/>
    <property type="match status" value="1"/>
</dbReference>
<dbReference type="NCBIfam" id="NF010055">
    <property type="entry name" value="PRK13532.1"/>
    <property type="match status" value="1"/>
</dbReference>
<dbReference type="NCBIfam" id="TIGR01409">
    <property type="entry name" value="TAT_signal_seq"/>
    <property type="match status" value="1"/>
</dbReference>
<dbReference type="PANTHER" id="PTHR43105:SF11">
    <property type="entry name" value="PERIPLASMIC NITRATE REDUCTASE"/>
    <property type="match status" value="1"/>
</dbReference>
<dbReference type="PANTHER" id="PTHR43105">
    <property type="entry name" value="RESPIRATORY NITRATE REDUCTASE"/>
    <property type="match status" value="1"/>
</dbReference>
<dbReference type="Pfam" id="PF04879">
    <property type="entry name" value="Molybdop_Fe4S4"/>
    <property type="match status" value="1"/>
</dbReference>
<dbReference type="Pfam" id="PF00384">
    <property type="entry name" value="Molybdopterin"/>
    <property type="match status" value="1"/>
</dbReference>
<dbReference type="Pfam" id="PF01568">
    <property type="entry name" value="Molydop_binding"/>
    <property type="match status" value="1"/>
</dbReference>
<dbReference type="SMART" id="SM00926">
    <property type="entry name" value="Molybdop_Fe4S4"/>
    <property type="match status" value="1"/>
</dbReference>
<dbReference type="SUPFAM" id="SSF50692">
    <property type="entry name" value="ADC-like"/>
    <property type="match status" value="1"/>
</dbReference>
<dbReference type="SUPFAM" id="SSF53706">
    <property type="entry name" value="Formate dehydrogenase/DMSO reductase, domains 1-3"/>
    <property type="match status" value="1"/>
</dbReference>
<dbReference type="PROSITE" id="PS51669">
    <property type="entry name" value="4FE4S_MOW_BIS_MGD"/>
    <property type="match status" value="1"/>
</dbReference>
<dbReference type="PROSITE" id="PS00551">
    <property type="entry name" value="MOLYBDOPTERIN_PROK_1"/>
    <property type="match status" value="1"/>
</dbReference>
<dbReference type="PROSITE" id="PS51318">
    <property type="entry name" value="TAT"/>
    <property type="match status" value="1"/>
</dbReference>